<keyword id="KW-0474">Menaquinone biosynthesis</keyword>
<keyword id="KW-0489">Methyltransferase</keyword>
<keyword id="KW-1185">Reference proteome</keyword>
<keyword id="KW-0949">S-adenosyl-L-methionine</keyword>
<keyword id="KW-0808">Transferase</keyword>
<keyword id="KW-0831">Ubiquinone biosynthesis</keyword>
<feature type="chain" id="PRO_1000187783" description="Ubiquinone/menaquinone biosynthesis C-methyltransferase UbiE">
    <location>
        <begin position="1"/>
        <end position="250"/>
    </location>
</feature>
<feature type="binding site" evidence="1">
    <location>
        <position position="74"/>
    </location>
    <ligand>
        <name>S-adenosyl-L-methionine</name>
        <dbReference type="ChEBI" id="CHEBI:59789"/>
    </ligand>
</feature>
<feature type="binding site" evidence="1">
    <location>
        <position position="94"/>
    </location>
    <ligand>
        <name>S-adenosyl-L-methionine</name>
        <dbReference type="ChEBI" id="CHEBI:59789"/>
    </ligand>
</feature>
<feature type="binding site" evidence="1">
    <location>
        <begin position="122"/>
        <end position="123"/>
    </location>
    <ligand>
        <name>S-adenosyl-L-methionine</name>
        <dbReference type="ChEBI" id="CHEBI:59789"/>
    </ligand>
</feature>
<feature type="binding site" evidence="1">
    <location>
        <position position="139"/>
    </location>
    <ligand>
        <name>S-adenosyl-L-methionine</name>
        <dbReference type="ChEBI" id="CHEBI:59789"/>
    </ligand>
</feature>
<organism>
    <name type="scientific">Paracoccus denitrificans (strain Pd 1222)</name>
    <dbReference type="NCBI Taxonomy" id="318586"/>
    <lineage>
        <taxon>Bacteria</taxon>
        <taxon>Pseudomonadati</taxon>
        <taxon>Pseudomonadota</taxon>
        <taxon>Alphaproteobacteria</taxon>
        <taxon>Rhodobacterales</taxon>
        <taxon>Paracoccaceae</taxon>
        <taxon>Paracoccus</taxon>
    </lineage>
</organism>
<sequence>MTPDEPKETHFGFRTVAEKDKAGLVHGVFSRVASRYDVMNDLMSGGVHRIWKTAMMDWLAPRDGQHLLDVAGGTGDIAFRFLDRAPGARVTVCDMTESMLVEGRKRAEAGKQADRLAWVTGDAMALPFADDSFDRYTISFGIRNVTRIPDALAEARRVLRPGGRLMVLEFSQMPVPMLQWLYDRYSFNVIPVMGQIVANDRDSYQYLVESIRKFPDQETFATMIREAGFGRVQWRNLSMGIAALHSGWKL</sequence>
<protein>
    <recommendedName>
        <fullName evidence="1">Ubiquinone/menaquinone biosynthesis C-methyltransferase UbiE</fullName>
        <ecNumber evidence="1">2.1.1.163</ecNumber>
        <ecNumber evidence="1">2.1.1.201</ecNumber>
    </recommendedName>
    <alternativeName>
        <fullName evidence="1">2-methoxy-6-polyprenyl-1,4-benzoquinol methylase</fullName>
    </alternativeName>
    <alternativeName>
        <fullName evidence="1">Demethylmenaquinone methyltransferase</fullName>
    </alternativeName>
</protein>
<name>UBIE_PARDP</name>
<dbReference type="EC" id="2.1.1.163" evidence="1"/>
<dbReference type="EC" id="2.1.1.201" evidence="1"/>
<dbReference type="EMBL" id="CP000490">
    <property type="protein sequence ID" value="ABL72575.1"/>
    <property type="molecule type" value="Genomic_DNA"/>
</dbReference>
<dbReference type="RefSeq" id="WP_011750736.1">
    <property type="nucleotide sequence ID" value="NC_008687.1"/>
</dbReference>
<dbReference type="SMR" id="A1BAN1"/>
<dbReference type="STRING" id="318586.Pden_4511"/>
<dbReference type="EnsemblBacteria" id="ABL72575">
    <property type="protein sequence ID" value="ABL72575"/>
    <property type="gene ID" value="Pden_4511"/>
</dbReference>
<dbReference type="GeneID" id="93454178"/>
<dbReference type="KEGG" id="pde:Pden_4511"/>
<dbReference type="eggNOG" id="COG2226">
    <property type="taxonomic scope" value="Bacteria"/>
</dbReference>
<dbReference type="HOGENOM" id="CLU_037990_0_0_5"/>
<dbReference type="OrthoDB" id="9808140at2"/>
<dbReference type="UniPathway" id="UPA00079">
    <property type="reaction ID" value="UER00169"/>
</dbReference>
<dbReference type="UniPathway" id="UPA00232"/>
<dbReference type="Proteomes" id="UP000000361">
    <property type="component" value="Chromosome 2"/>
</dbReference>
<dbReference type="GO" id="GO:0008425">
    <property type="term" value="F:2-methoxy-6-polyprenyl-1,4-benzoquinol methyltransferase activity"/>
    <property type="evidence" value="ECO:0007669"/>
    <property type="project" value="UniProtKB-UniRule"/>
</dbReference>
<dbReference type="GO" id="GO:0043770">
    <property type="term" value="F:demethylmenaquinone methyltransferase activity"/>
    <property type="evidence" value="ECO:0007669"/>
    <property type="project" value="UniProtKB-UniRule"/>
</dbReference>
<dbReference type="GO" id="GO:0009060">
    <property type="term" value="P:aerobic respiration"/>
    <property type="evidence" value="ECO:0007669"/>
    <property type="project" value="UniProtKB-UniRule"/>
</dbReference>
<dbReference type="GO" id="GO:0009234">
    <property type="term" value="P:menaquinone biosynthetic process"/>
    <property type="evidence" value="ECO:0007669"/>
    <property type="project" value="UniProtKB-UniRule"/>
</dbReference>
<dbReference type="GO" id="GO:0032259">
    <property type="term" value="P:methylation"/>
    <property type="evidence" value="ECO:0007669"/>
    <property type="project" value="UniProtKB-KW"/>
</dbReference>
<dbReference type="CDD" id="cd02440">
    <property type="entry name" value="AdoMet_MTases"/>
    <property type="match status" value="1"/>
</dbReference>
<dbReference type="FunFam" id="3.40.50.150:FF:000064">
    <property type="entry name" value="2-methoxy-6-polyprenyl-1,4-benzoquinol methylase, mitochondrial"/>
    <property type="match status" value="1"/>
</dbReference>
<dbReference type="Gene3D" id="3.40.50.150">
    <property type="entry name" value="Vaccinia Virus protein VP39"/>
    <property type="match status" value="1"/>
</dbReference>
<dbReference type="HAMAP" id="MF_01813">
    <property type="entry name" value="MenG_UbiE_methyltr"/>
    <property type="match status" value="1"/>
</dbReference>
<dbReference type="InterPro" id="IPR029063">
    <property type="entry name" value="SAM-dependent_MTases_sf"/>
</dbReference>
<dbReference type="InterPro" id="IPR004033">
    <property type="entry name" value="UbiE/COQ5_MeTrFase"/>
</dbReference>
<dbReference type="InterPro" id="IPR023576">
    <property type="entry name" value="UbiE/COQ5_MeTrFase_CS"/>
</dbReference>
<dbReference type="NCBIfam" id="TIGR01934">
    <property type="entry name" value="MenG_MenH_UbiE"/>
    <property type="match status" value="1"/>
</dbReference>
<dbReference type="NCBIfam" id="NF001242">
    <property type="entry name" value="PRK00216.1-3"/>
    <property type="match status" value="1"/>
</dbReference>
<dbReference type="NCBIfam" id="NF001244">
    <property type="entry name" value="PRK00216.1-5"/>
    <property type="match status" value="1"/>
</dbReference>
<dbReference type="PANTHER" id="PTHR43591:SF24">
    <property type="entry name" value="2-METHOXY-6-POLYPRENYL-1,4-BENZOQUINOL METHYLASE, MITOCHONDRIAL"/>
    <property type="match status" value="1"/>
</dbReference>
<dbReference type="PANTHER" id="PTHR43591">
    <property type="entry name" value="METHYLTRANSFERASE"/>
    <property type="match status" value="1"/>
</dbReference>
<dbReference type="Pfam" id="PF01209">
    <property type="entry name" value="Ubie_methyltran"/>
    <property type="match status" value="1"/>
</dbReference>
<dbReference type="SUPFAM" id="SSF53335">
    <property type="entry name" value="S-adenosyl-L-methionine-dependent methyltransferases"/>
    <property type="match status" value="1"/>
</dbReference>
<dbReference type="PROSITE" id="PS51608">
    <property type="entry name" value="SAM_MT_UBIE"/>
    <property type="match status" value="1"/>
</dbReference>
<dbReference type="PROSITE" id="PS01183">
    <property type="entry name" value="UBIE_1"/>
    <property type="match status" value="1"/>
</dbReference>
<dbReference type="PROSITE" id="PS01184">
    <property type="entry name" value="UBIE_2"/>
    <property type="match status" value="1"/>
</dbReference>
<gene>
    <name evidence="1" type="primary">ubiE</name>
    <name type="ordered locus">Pden_4511</name>
</gene>
<accession>A1BAN1</accession>
<comment type="function">
    <text evidence="1">Methyltransferase required for the conversion of demethylmenaquinol (DMKH2) to menaquinol (MKH2) and the conversion of 2-polyprenyl-6-methoxy-1,4-benzoquinol (DDMQH2) to 2-polyprenyl-3-methyl-6-methoxy-1,4-benzoquinol (DMQH2).</text>
</comment>
<comment type="catalytic activity">
    <reaction evidence="1">
        <text>a 2-demethylmenaquinol + S-adenosyl-L-methionine = a menaquinol + S-adenosyl-L-homocysteine + H(+)</text>
        <dbReference type="Rhea" id="RHEA:42640"/>
        <dbReference type="Rhea" id="RHEA-COMP:9539"/>
        <dbReference type="Rhea" id="RHEA-COMP:9563"/>
        <dbReference type="ChEBI" id="CHEBI:15378"/>
        <dbReference type="ChEBI" id="CHEBI:18151"/>
        <dbReference type="ChEBI" id="CHEBI:55437"/>
        <dbReference type="ChEBI" id="CHEBI:57856"/>
        <dbReference type="ChEBI" id="CHEBI:59789"/>
        <dbReference type="EC" id="2.1.1.163"/>
    </reaction>
</comment>
<comment type="catalytic activity">
    <reaction evidence="1">
        <text>a 2-methoxy-6-(all-trans-polyprenyl)benzene-1,4-diol + S-adenosyl-L-methionine = a 5-methoxy-2-methyl-3-(all-trans-polyprenyl)benzene-1,4-diol + S-adenosyl-L-homocysteine + H(+)</text>
        <dbReference type="Rhea" id="RHEA:28286"/>
        <dbReference type="Rhea" id="RHEA-COMP:10858"/>
        <dbReference type="Rhea" id="RHEA-COMP:10859"/>
        <dbReference type="ChEBI" id="CHEBI:15378"/>
        <dbReference type="ChEBI" id="CHEBI:57856"/>
        <dbReference type="ChEBI" id="CHEBI:59789"/>
        <dbReference type="ChEBI" id="CHEBI:84166"/>
        <dbReference type="ChEBI" id="CHEBI:84167"/>
        <dbReference type="EC" id="2.1.1.201"/>
    </reaction>
</comment>
<comment type="pathway">
    <text evidence="1">Quinol/quinone metabolism; menaquinone biosynthesis; menaquinol from 1,4-dihydroxy-2-naphthoate: step 2/2.</text>
</comment>
<comment type="pathway">
    <text evidence="1">Cofactor biosynthesis; ubiquinone biosynthesis.</text>
</comment>
<comment type="similarity">
    <text evidence="1">Belongs to the class I-like SAM-binding methyltransferase superfamily. MenG/UbiE family.</text>
</comment>
<proteinExistence type="inferred from homology"/>
<evidence type="ECO:0000255" key="1">
    <source>
        <dbReference type="HAMAP-Rule" id="MF_01813"/>
    </source>
</evidence>
<reference key="1">
    <citation type="submission" date="2006-12" db="EMBL/GenBank/DDBJ databases">
        <title>Complete sequence of chromosome 2 of Paracoccus denitrificans PD1222.</title>
        <authorList>
            <person name="Copeland A."/>
            <person name="Lucas S."/>
            <person name="Lapidus A."/>
            <person name="Barry K."/>
            <person name="Detter J.C."/>
            <person name="Glavina del Rio T."/>
            <person name="Hammon N."/>
            <person name="Israni S."/>
            <person name="Dalin E."/>
            <person name="Tice H."/>
            <person name="Pitluck S."/>
            <person name="Munk A.C."/>
            <person name="Brettin T."/>
            <person name="Bruce D."/>
            <person name="Han C."/>
            <person name="Tapia R."/>
            <person name="Gilna P."/>
            <person name="Schmutz J."/>
            <person name="Larimer F."/>
            <person name="Land M."/>
            <person name="Hauser L."/>
            <person name="Kyrpides N."/>
            <person name="Lykidis A."/>
            <person name="Spiro S."/>
            <person name="Richardson D.J."/>
            <person name="Moir J.W.B."/>
            <person name="Ferguson S.J."/>
            <person name="van Spanning R.J.M."/>
            <person name="Richardson P."/>
        </authorList>
    </citation>
    <scope>NUCLEOTIDE SEQUENCE [LARGE SCALE GENOMIC DNA]</scope>
    <source>
        <strain>Pd 1222</strain>
    </source>
</reference>